<gene>
    <name evidence="1" type="primary">smpB</name>
    <name type="ordered locus">Ccel_0819</name>
</gene>
<protein>
    <recommendedName>
        <fullName evidence="1">SsrA-binding protein</fullName>
    </recommendedName>
    <alternativeName>
        <fullName evidence="1">Small protein B</fullName>
    </alternativeName>
</protein>
<reference key="1">
    <citation type="submission" date="2009-01" db="EMBL/GenBank/DDBJ databases">
        <title>Complete sequence of Clostridium cellulolyticum H10.</title>
        <authorList>
            <consortium name="US DOE Joint Genome Institute"/>
            <person name="Lucas S."/>
            <person name="Copeland A."/>
            <person name="Lapidus A."/>
            <person name="Glavina del Rio T."/>
            <person name="Dalin E."/>
            <person name="Tice H."/>
            <person name="Bruce D."/>
            <person name="Goodwin L."/>
            <person name="Pitluck S."/>
            <person name="Chertkov O."/>
            <person name="Saunders E."/>
            <person name="Brettin T."/>
            <person name="Detter J.C."/>
            <person name="Han C."/>
            <person name="Larimer F."/>
            <person name="Land M."/>
            <person name="Hauser L."/>
            <person name="Kyrpides N."/>
            <person name="Ivanova N."/>
            <person name="Zhou J."/>
            <person name="Richardson P."/>
        </authorList>
    </citation>
    <scope>NUCLEOTIDE SEQUENCE [LARGE SCALE GENOMIC DNA]</scope>
    <source>
        <strain>ATCC 35319 / DSM 5812 / JCM 6584 / H10</strain>
    </source>
</reference>
<name>SSRP_RUMCH</name>
<evidence type="ECO:0000255" key="1">
    <source>
        <dbReference type="HAMAP-Rule" id="MF_00023"/>
    </source>
</evidence>
<keyword id="KW-0963">Cytoplasm</keyword>
<keyword id="KW-1185">Reference proteome</keyword>
<keyword id="KW-0694">RNA-binding</keyword>
<feature type="chain" id="PRO_1000116857" description="SsrA-binding protein">
    <location>
        <begin position="1"/>
        <end position="154"/>
    </location>
</feature>
<dbReference type="EMBL" id="CP001348">
    <property type="protein sequence ID" value="ACL75197.1"/>
    <property type="molecule type" value="Genomic_DNA"/>
</dbReference>
<dbReference type="RefSeq" id="WP_015924359.1">
    <property type="nucleotide sequence ID" value="NC_011898.1"/>
</dbReference>
<dbReference type="SMR" id="B8I8G4"/>
<dbReference type="STRING" id="394503.Ccel_0819"/>
<dbReference type="KEGG" id="cce:Ccel_0819"/>
<dbReference type="eggNOG" id="COG0691">
    <property type="taxonomic scope" value="Bacteria"/>
</dbReference>
<dbReference type="HOGENOM" id="CLU_108953_0_0_9"/>
<dbReference type="OrthoDB" id="9805462at2"/>
<dbReference type="Proteomes" id="UP000001349">
    <property type="component" value="Chromosome"/>
</dbReference>
<dbReference type="GO" id="GO:0005829">
    <property type="term" value="C:cytosol"/>
    <property type="evidence" value="ECO:0007669"/>
    <property type="project" value="TreeGrafter"/>
</dbReference>
<dbReference type="GO" id="GO:0003723">
    <property type="term" value="F:RNA binding"/>
    <property type="evidence" value="ECO:0007669"/>
    <property type="project" value="UniProtKB-UniRule"/>
</dbReference>
<dbReference type="GO" id="GO:0070929">
    <property type="term" value="P:trans-translation"/>
    <property type="evidence" value="ECO:0007669"/>
    <property type="project" value="UniProtKB-UniRule"/>
</dbReference>
<dbReference type="CDD" id="cd09294">
    <property type="entry name" value="SmpB"/>
    <property type="match status" value="1"/>
</dbReference>
<dbReference type="Gene3D" id="2.40.280.10">
    <property type="match status" value="1"/>
</dbReference>
<dbReference type="HAMAP" id="MF_00023">
    <property type="entry name" value="SmpB"/>
    <property type="match status" value="1"/>
</dbReference>
<dbReference type="InterPro" id="IPR023620">
    <property type="entry name" value="SmpB"/>
</dbReference>
<dbReference type="InterPro" id="IPR000037">
    <property type="entry name" value="SsrA-bd_prot"/>
</dbReference>
<dbReference type="InterPro" id="IPR020081">
    <property type="entry name" value="SsrA-bd_prot_CS"/>
</dbReference>
<dbReference type="NCBIfam" id="NF003843">
    <property type="entry name" value="PRK05422.1"/>
    <property type="match status" value="1"/>
</dbReference>
<dbReference type="NCBIfam" id="TIGR00086">
    <property type="entry name" value="smpB"/>
    <property type="match status" value="1"/>
</dbReference>
<dbReference type="PANTHER" id="PTHR30308:SF2">
    <property type="entry name" value="SSRA-BINDING PROTEIN"/>
    <property type="match status" value="1"/>
</dbReference>
<dbReference type="PANTHER" id="PTHR30308">
    <property type="entry name" value="TMRNA-BINDING COMPONENT OF TRANS-TRANSLATION TAGGING COMPLEX"/>
    <property type="match status" value="1"/>
</dbReference>
<dbReference type="Pfam" id="PF01668">
    <property type="entry name" value="SmpB"/>
    <property type="match status" value="1"/>
</dbReference>
<dbReference type="SUPFAM" id="SSF74982">
    <property type="entry name" value="Small protein B (SmpB)"/>
    <property type="match status" value="1"/>
</dbReference>
<dbReference type="PROSITE" id="PS01317">
    <property type="entry name" value="SSRP"/>
    <property type="match status" value="1"/>
</dbReference>
<proteinExistence type="inferred from homology"/>
<sequence length="154" mass="17592">MVKEAVKIVAQNKKARHDYFIEETIEAGIVLSGTEVKSVRQGKLNLKESYASIVEGEVIVSGMHISPYEQGNIFNKDPLRDRKLLLHKSEINRLIGLTQQKGYTLVPVQAYLKRGMVKIELGVARGKKLYDKRDDIAARDAKREIDRKMKEQLR</sequence>
<comment type="function">
    <text evidence="1">Required for rescue of stalled ribosomes mediated by trans-translation. Binds to transfer-messenger RNA (tmRNA), required for stable association of tmRNA with ribosomes. tmRNA and SmpB together mimic tRNA shape, replacing the anticodon stem-loop with SmpB. tmRNA is encoded by the ssrA gene; the 2 termini fold to resemble tRNA(Ala) and it encodes a 'tag peptide', a short internal open reading frame. During trans-translation Ala-aminoacylated tmRNA acts like a tRNA, entering the A-site of stalled ribosomes, displacing the stalled mRNA. The ribosome then switches to translate the ORF on the tmRNA; the nascent peptide is terminated with the 'tag peptide' encoded by the tmRNA and targeted for degradation. The ribosome is freed to recommence translation, which seems to be the essential function of trans-translation.</text>
</comment>
<comment type="subcellular location">
    <subcellularLocation>
        <location evidence="1">Cytoplasm</location>
    </subcellularLocation>
    <text evidence="1">The tmRNA-SmpB complex associates with stalled 70S ribosomes.</text>
</comment>
<comment type="similarity">
    <text evidence="1">Belongs to the SmpB family.</text>
</comment>
<accession>B8I8G4</accession>
<organism>
    <name type="scientific">Ruminiclostridium cellulolyticum (strain ATCC 35319 / DSM 5812 / JCM 6584 / H10)</name>
    <name type="common">Clostridium cellulolyticum</name>
    <dbReference type="NCBI Taxonomy" id="394503"/>
    <lineage>
        <taxon>Bacteria</taxon>
        <taxon>Bacillati</taxon>
        <taxon>Bacillota</taxon>
        <taxon>Clostridia</taxon>
        <taxon>Eubacteriales</taxon>
        <taxon>Oscillospiraceae</taxon>
        <taxon>Ruminiclostridium</taxon>
    </lineage>
</organism>